<accession>B1JNC5</accession>
<evidence type="ECO:0000255" key="1">
    <source>
        <dbReference type="HAMAP-Rule" id="MF_01534"/>
    </source>
</evidence>
<dbReference type="EMBL" id="CP000950">
    <property type="protein sequence ID" value="ACA70107.1"/>
    <property type="molecule type" value="Genomic_DNA"/>
</dbReference>
<dbReference type="RefSeq" id="WP_011906460.1">
    <property type="nucleotide sequence ID" value="NZ_CP009792.1"/>
</dbReference>
<dbReference type="SMR" id="B1JNC5"/>
<dbReference type="GeneID" id="49787619"/>
<dbReference type="KEGG" id="ypy:YPK_3842"/>
<dbReference type="PATRIC" id="fig|502800.11.peg.189"/>
<dbReference type="GO" id="GO:0005737">
    <property type="term" value="C:cytoplasm"/>
    <property type="evidence" value="ECO:0007669"/>
    <property type="project" value="UniProtKB-SubCell"/>
</dbReference>
<dbReference type="GO" id="GO:0003700">
    <property type="term" value="F:DNA-binding transcription factor activity"/>
    <property type="evidence" value="ECO:0007669"/>
    <property type="project" value="UniProtKB-UniRule"/>
</dbReference>
<dbReference type="GO" id="GO:0043565">
    <property type="term" value="F:sequence-specific DNA binding"/>
    <property type="evidence" value="ECO:0007669"/>
    <property type="project" value="InterPro"/>
</dbReference>
<dbReference type="GO" id="GO:0045893">
    <property type="term" value="P:positive regulation of DNA-templated transcription"/>
    <property type="evidence" value="ECO:0007669"/>
    <property type="project" value="UniProtKB-UniRule"/>
</dbReference>
<dbReference type="GO" id="GO:0019299">
    <property type="term" value="P:rhamnose metabolic process"/>
    <property type="evidence" value="ECO:0007669"/>
    <property type="project" value="UniProtKB-UniRule"/>
</dbReference>
<dbReference type="CDD" id="cd06977">
    <property type="entry name" value="cupin_RhaR_RhaS-like_N"/>
    <property type="match status" value="1"/>
</dbReference>
<dbReference type="Gene3D" id="1.10.10.60">
    <property type="entry name" value="Homeodomain-like"/>
    <property type="match status" value="1"/>
</dbReference>
<dbReference type="Gene3D" id="2.60.120.10">
    <property type="entry name" value="Jelly Rolls"/>
    <property type="match status" value="1"/>
</dbReference>
<dbReference type="HAMAP" id="MF_01534">
    <property type="entry name" value="HTH_type_RhaS"/>
    <property type="match status" value="1"/>
</dbReference>
<dbReference type="InterPro" id="IPR003313">
    <property type="entry name" value="AraC-bd"/>
</dbReference>
<dbReference type="InterPro" id="IPR050204">
    <property type="entry name" value="AraC_XylS_family_regulators"/>
</dbReference>
<dbReference type="InterPro" id="IPR009057">
    <property type="entry name" value="Homeodomain-like_sf"/>
</dbReference>
<dbReference type="InterPro" id="IPR037923">
    <property type="entry name" value="HTH-like"/>
</dbReference>
<dbReference type="InterPro" id="IPR018060">
    <property type="entry name" value="HTH_AraC"/>
</dbReference>
<dbReference type="InterPro" id="IPR018062">
    <property type="entry name" value="HTH_AraC-typ_CS"/>
</dbReference>
<dbReference type="InterPro" id="IPR047220">
    <property type="entry name" value="RhaR_RhaS-like_N"/>
</dbReference>
<dbReference type="InterPro" id="IPR014710">
    <property type="entry name" value="RmlC-like_jellyroll"/>
</dbReference>
<dbReference type="InterPro" id="IPR020449">
    <property type="entry name" value="Tscrpt_reg_AraC-type_HTH"/>
</dbReference>
<dbReference type="InterPro" id="IPR023609">
    <property type="entry name" value="Tscrpt_reg_HTH_RhaS"/>
</dbReference>
<dbReference type="NCBIfam" id="NF010028">
    <property type="entry name" value="PRK13503.1"/>
    <property type="match status" value="1"/>
</dbReference>
<dbReference type="PANTHER" id="PTHR46796:SF13">
    <property type="entry name" value="HTH-TYPE TRANSCRIPTIONAL ACTIVATOR RHAS"/>
    <property type="match status" value="1"/>
</dbReference>
<dbReference type="PANTHER" id="PTHR46796">
    <property type="entry name" value="HTH-TYPE TRANSCRIPTIONAL ACTIVATOR RHAS-RELATED"/>
    <property type="match status" value="1"/>
</dbReference>
<dbReference type="Pfam" id="PF02311">
    <property type="entry name" value="AraC_binding"/>
    <property type="match status" value="1"/>
</dbReference>
<dbReference type="Pfam" id="PF12833">
    <property type="entry name" value="HTH_18"/>
    <property type="match status" value="1"/>
</dbReference>
<dbReference type="PRINTS" id="PR00032">
    <property type="entry name" value="HTHARAC"/>
</dbReference>
<dbReference type="SMART" id="SM00342">
    <property type="entry name" value="HTH_ARAC"/>
    <property type="match status" value="1"/>
</dbReference>
<dbReference type="SUPFAM" id="SSF46689">
    <property type="entry name" value="Homeodomain-like"/>
    <property type="match status" value="2"/>
</dbReference>
<dbReference type="SUPFAM" id="SSF51215">
    <property type="entry name" value="Regulatory protein AraC"/>
    <property type="match status" value="1"/>
</dbReference>
<dbReference type="PROSITE" id="PS00041">
    <property type="entry name" value="HTH_ARAC_FAMILY_1"/>
    <property type="match status" value="1"/>
</dbReference>
<dbReference type="PROSITE" id="PS01124">
    <property type="entry name" value="HTH_ARAC_FAMILY_2"/>
    <property type="match status" value="1"/>
</dbReference>
<comment type="function">
    <text evidence="1">Activates expression of the rhaBAD and rhaT operons.</text>
</comment>
<comment type="subunit">
    <text evidence="1">Binds DNA as a dimer.</text>
</comment>
<comment type="subcellular location">
    <subcellularLocation>
        <location evidence="1">Cytoplasm</location>
    </subcellularLocation>
</comment>
<protein>
    <recommendedName>
        <fullName evidence="1">HTH-type transcriptional activator RhaS</fullName>
    </recommendedName>
    <alternativeName>
        <fullName evidence="1">L-rhamnose operon regulatory protein RhaS</fullName>
    </alternativeName>
</protein>
<proteinExistence type="inferred from homology"/>
<feature type="chain" id="PRO_1000200969" description="HTH-type transcriptional activator RhaS">
    <location>
        <begin position="1"/>
        <end position="273"/>
    </location>
</feature>
<feature type="domain" description="HTH araC/xylS-type" evidence="1">
    <location>
        <begin position="174"/>
        <end position="272"/>
    </location>
</feature>
<feature type="DNA-binding region" description="H-T-H motif" evidence="1">
    <location>
        <begin position="191"/>
        <end position="212"/>
    </location>
</feature>
<feature type="DNA-binding region" description="H-T-H motif" evidence="1">
    <location>
        <begin position="239"/>
        <end position="262"/>
    </location>
</feature>
<feature type="site" description="Interaction with sigma-70" evidence="1">
    <location>
        <position position="241"/>
    </location>
</feature>
<feature type="site" description="Interaction with sigma-70" evidence="1">
    <location>
        <position position="250"/>
    </location>
</feature>
<keyword id="KW-0010">Activator</keyword>
<keyword id="KW-0963">Cytoplasm</keyword>
<keyword id="KW-0238">DNA-binding</keyword>
<keyword id="KW-0677">Repeat</keyword>
<keyword id="KW-0684">Rhamnose metabolism</keyword>
<keyword id="KW-0804">Transcription</keyword>
<keyword id="KW-0805">Transcription regulation</keyword>
<gene>
    <name evidence="1" type="primary">rhaS</name>
    <name type="ordered locus">YPK_3842</name>
</gene>
<reference key="1">
    <citation type="submission" date="2008-02" db="EMBL/GenBank/DDBJ databases">
        <title>Complete sequence of Yersinia pseudotuberculosis YPIII.</title>
        <authorList>
            <consortium name="US DOE Joint Genome Institute"/>
            <person name="Copeland A."/>
            <person name="Lucas S."/>
            <person name="Lapidus A."/>
            <person name="Glavina del Rio T."/>
            <person name="Dalin E."/>
            <person name="Tice H."/>
            <person name="Bruce D."/>
            <person name="Goodwin L."/>
            <person name="Pitluck S."/>
            <person name="Munk A.C."/>
            <person name="Brettin T."/>
            <person name="Detter J.C."/>
            <person name="Han C."/>
            <person name="Tapia R."/>
            <person name="Schmutz J."/>
            <person name="Larimer F."/>
            <person name="Land M."/>
            <person name="Hauser L."/>
            <person name="Challacombe J.F."/>
            <person name="Green L."/>
            <person name="Lindler L.E."/>
            <person name="Nikolich M.P."/>
            <person name="Richardson P."/>
        </authorList>
    </citation>
    <scope>NUCLEOTIDE SEQUENCE [LARGE SCALE GENOMIC DNA]</scope>
    <source>
        <strain>YPIII</strain>
    </source>
</reference>
<organism>
    <name type="scientific">Yersinia pseudotuberculosis serotype O:3 (strain YPIII)</name>
    <dbReference type="NCBI Taxonomy" id="502800"/>
    <lineage>
        <taxon>Bacteria</taxon>
        <taxon>Pseudomonadati</taxon>
        <taxon>Pseudomonadota</taxon>
        <taxon>Gammaproteobacteria</taxon>
        <taxon>Enterobacterales</taxon>
        <taxon>Yersiniaceae</taxon>
        <taxon>Yersinia</taxon>
    </lineage>
</organism>
<name>RHAS_YERPY</name>
<sequence>MTVLHSIDFFSSSSAPVAIEARAPQSAFPEHHHDFYEIVIVEEGAGVHVFNGNPYTLSRGCVCFVRDHDRHLFESTDDLFLTNVLFRAPDAFRFLSGVGHFLPRECDGVYPSHWRVNGQVLQQIKCLIACLEHAPKSDQVEDIALHESVFMQLLVKLWQGCQTQAGDDQEGRLYQLLDWLQNNYSEAVEWPELADRFALPLRTLHRQLKNKTGMTPQRYLTRLRLLQARHQLCYSDNSVTDIAYLCGFGDSNHFSTLFKREFSQSPRDLRSQL</sequence>